<comment type="function">
    <text evidence="1">Forms a polymeric layer at the periphery of the spindle pole body (SPB) central plaque which has an essential function during SPB duplication and may facilitate attachment of the SPB to the nuclear membrane.</text>
</comment>
<comment type="subcellular location">
    <subcellularLocation>
        <location evidence="1">Nucleus</location>
    </subcellularLocation>
    <subcellularLocation>
        <location evidence="1">Cytoplasm</location>
        <location evidence="1">Cytoskeleton</location>
        <location evidence="1">Microtubule organizing center</location>
        <location evidence="1">Spindle pole body</location>
    </subcellularLocation>
</comment>
<comment type="similarity">
    <text evidence="4">Belongs to the SPC42 family.</text>
</comment>
<keyword id="KW-0175">Coiled coil</keyword>
<keyword id="KW-0963">Cytoplasm</keyword>
<keyword id="KW-0206">Cytoskeleton</keyword>
<keyword id="KW-0539">Nucleus</keyword>
<keyword id="KW-1185">Reference proteome</keyword>
<name>SPC42_KLULA</name>
<gene>
    <name type="primary">SPC42</name>
    <name type="ordered locus">KLLA0F04862g</name>
</gene>
<proteinExistence type="inferred from homology"/>
<reference key="1">
    <citation type="journal article" date="2004" name="Nature">
        <title>Genome evolution in yeasts.</title>
        <authorList>
            <person name="Dujon B."/>
            <person name="Sherman D."/>
            <person name="Fischer G."/>
            <person name="Durrens P."/>
            <person name="Casaregola S."/>
            <person name="Lafontaine I."/>
            <person name="de Montigny J."/>
            <person name="Marck C."/>
            <person name="Neuveglise C."/>
            <person name="Talla E."/>
            <person name="Goffard N."/>
            <person name="Frangeul L."/>
            <person name="Aigle M."/>
            <person name="Anthouard V."/>
            <person name="Babour A."/>
            <person name="Barbe V."/>
            <person name="Barnay S."/>
            <person name="Blanchin S."/>
            <person name="Beckerich J.-M."/>
            <person name="Beyne E."/>
            <person name="Bleykasten C."/>
            <person name="Boisrame A."/>
            <person name="Boyer J."/>
            <person name="Cattolico L."/>
            <person name="Confanioleri F."/>
            <person name="de Daruvar A."/>
            <person name="Despons L."/>
            <person name="Fabre E."/>
            <person name="Fairhead C."/>
            <person name="Ferry-Dumazet H."/>
            <person name="Groppi A."/>
            <person name="Hantraye F."/>
            <person name="Hennequin C."/>
            <person name="Jauniaux N."/>
            <person name="Joyet P."/>
            <person name="Kachouri R."/>
            <person name="Kerrest A."/>
            <person name="Koszul R."/>
            <person name="Lemaire M."/>
            <person name="Lesur I."/>
            <person name="Ma L."/>
            <person name="Muller H."/>
            <person name="Nicaud J.-M."/>
            <person name="Nikolski M."/>
            <person name="Oztas S."/>
            <person name="Ozier-Kalogeropoulos O."/>
            <person name="Pellenz S."/>
            <person name="Potier S."/>
            <person name="Richard G.-F."/>
            <person name="Straub M.-L."/>
            <person name="Suleau A."/>
            <person name="Swennen D."/>
            <person name="Tekaia F."/>
            <person name="Wesolowski-Louvel M."/>
            <person name="Westhof E."/>
            <person name="Wirth B."/>
            <person name="Zeniou-Meyer M."/>
            <person name="Zivanovic Y."/>
            <person name="Bolotin-Fukuhara M."/>
            <person name="Thierry A."/>
            <person name="Bouchier C."/>
            <person name="Caudron B."/>
            <person name="Scarpelli C."/>
            <person name="Gaillardin C."/>
            <person name="Weissenbach J."/>
            <person name="Wincker P."/>
            <person name="Souciet J.-L."/>
        </authorList>
    </citation>
    <scope>NUCLEOTIDE SEQUENCE [LARGE SCALE GENOMIC DNA]</scope>
    <source>
        <strain>ATCC 8585 / CBS 2359 / DSM 70799 / NBRC 1267 / NRRL Y-1140 / WM37</strain>
    </source>
</reference>
<evidence type="ECO:0000250" key="1"/>
<evidence type="ECO:0000255" key="2"/>
<evidence type="ECO:0000256" key="3">
    <source>
        <dbReference type="SAM" id="MobiDB-lite"/>
    </source>
</evidence>
<evidence type="ECO:0000305" key="4"/>
<accession>Q6CL89</accession>
<dbReference type="EMBL" id="CR382126">
    <property type="protein sequence ID" value="CAG98008.1"/>
    <property type="molecule type" value="Genomic_DNA"/>
</dbReference>
<dbReference type="RefSeq" id="XP_455300.1">
    <property type="nucleotide sequence ID" value="XM_455300.1"/>
</dbReference>
<dbReference type="SMR" id="Q6CL89"/>
<dbReference type="FunCoup" id="Q6CL89">
    <property type="interactions" value="208"/>
</dbReference>
<dbReference type="STRING" id="284590.Q6CL89"/>
<dbReference type="PaxDb" id="284590-Q6CL89"/>
<dbReference type="KEGG" id="kla:KLLA0_F04862g"/>
<dbReference type="eggNOG" id="ENOG502RYX7">
    <property type="taxonomic scope" value="Eukaryota"/>
</dbReference>
<dbReference type="HOGENOM" id="CLU_056211_0_0_1"/>
<dbReference type="InParanoid" id="Q6CL89"/>
<dbReference type="OMA" id="HNHATHR"/>
<dbReference type="Proteomes" id="UP000000598">
    <property type="component" value="Chromosome F"/>
</dbReference>
<dbReference type="GO" id="GO:0005737">
    <property type="term" value="C:cytoplasm"/>
    <property type="evidence" value="ECO:0007669"/>
    <property type="project" value="UniProtKB-KW"/>
</dbReference>
<dbReference type="GO" id="GO:0005634">
    <property type="term" value="C:nucleus"/>
    <property type="evidence" value="ECO:0007669"/>
    <property type="project" value="UniProtKB-SubCell"/>
</dbReference>
<dbReference type="GO" id="GO:0005816">
    <property type="term" value="C:spindle pole body"/>
    <property type="evidence" value="ECO:0007669"/>
    <property type="project" value="UniProtKB-SubCell"/>
</dbReference>
<dbReference type="InterPro" id="IPR021611">
    <property type="entry name" value="Spc42"/>
</dbReference>
<dbReference type="Pfam" id="PF11544">
    <property type="entry name" value="Spc42p"/>
    <property type="match status" value="1"/>
</dbReference>
<organism>
    <name type="scientific">Kluyveromyces lactis (strain ATCC 8585 / CBS 2359 / DSM 70799 / NBRC 1267 / NRRL Y-1140 / WM37)</name>
    <name type="common">Yeast</name>
    <name type="synonym">Candida sphaerica</name>
    <dbReference type="NCBI Taxonomy" id="284590"/>
    <lineage>
        <taxon>Eukaryota</taxon>
        <taxon>Fungi</taxon>
        <taxon>Dikarya</taxon>
        <taxon>Ascomycota</taxon>
        <taxon>Saccharomycotina</taxon>
        <taxon>Saccharomycetes</taxon>
        <taxon>Saccharomycetales</taxon>
        <taxon>Saccharomycetaceae</taxon>
        <taxon>Kluyveromyces</taxon>
    </lineage>
</organism>
<sequence>MIHNGSTPRRFVFGNNDANERIVPEEYKYNSSMINELIKQNKDLHKQVTEKQEEIDRLNVLIGSFRAKLIKYTELNKKMQRDQQEQQHNRHQSFESKPRYKAEFTSESSSPVSNERDSEYLQIKKNNRHDENKIDDIYQKLELLTNLVNDAIHKQNNGEQREPSNFNSRIVSDDDIIISESQEFKQLQDQIDLLKRKLLIKKENELRKLSLNKELADLMDELSMNSSPSANQNIDPYSELSSRPKSGQQRRTNEDQQSLHCEHCHLKSHTQSHPSEPRFVNLKESLETPTPTPTQTPRKLKREKDTNVADKQYSLW</sequence>
<feature type="chain" id="PRO_0000409209" description="Spindle pole body component SPC42">
    <location>
        <begin position="1"/>
        <end position="316"/>
    </location>
</feature>
<feature type="region of interest" description="Disordered" evidence="3">
    <location>
        <begin position="78"/>
        <end position="118"/>
    </location>
</feature>
<feature type="region of interest" description="Disordered" evidence="3">
    <location>
        <begin position="224"/>
        <end position="257"/>
    </location>
</feature>
<feature type="region of interest" description="Disordered" evidence="3">
    <location>
        <begin position="281"/>
        <end position="316"/>
    </location>
</feature>
<feature type="coiled-coil region" evidence="2">
    <location>
        <begin position="32"/>
        <end position="223"/>
    </location>
</feature>
<feature type="compositionally biased region" description="Basic and acidic residues" evidence="3">
    <location>
        <begin position="78"/>
        <end position="104"/>
    </location>
</feature>
<protein>
    <recommendedName>
        <fullName>Spindle pole body component SPC42</fullName>
    </recommendedName>
</protein>